<dbReference type="EMBL" id="CP001048">
    <property type="protein sequence ID" value="ACC89226.1"/>
    <property type="molecule type" value="Genomic_DNA"/>
</dbReference>
<dbReference type="EMBL" id="CP001048">
    <property type="protein sequence ID" value="ACC89229.1"/>
    <property type="molecule type" value="Genomic_DNA"/>
</dbReference>
<dbReference type="SMR" id="B2K4N0"/>
<dbReference type="KEGG" id="ypb:YPTS_2265"/>
<dbReference type="KEGG" id="ypb:YPTS_2268"/>
<dbReference type="HAMAP" id="MF_01581">
    <property type="entry name" value="UPF0482"/>
    <property type="match status" value="1"/>
</dbReference>
<dbReference type="InterPro" id="IPR009700">
    <property type="entry name" value="DUF1283"/>
</dbReference>
<dbReference type="NCBIfam" id="NF010180">
    <property type="entry name" value="PRK13659.1"/>
    <property type="match status" value="1"/>
</dbReference>
<dbReference type="Pfam" id="PF06932">
    <property type="entry name" value="DUF1283"/>
    <property type="match status" value="1"/>
</dbReference>
<sequence length="124" mass="14224">MMKINNLPRLIRTFLPATLLMLPLVWQTPALAQSASCTQGSTCVSVGGNNDPMSKEQARQSQQQWDETNRLRNKMNNRVEKDFDKNDRAVDAKDNCERSDNLNAYWEPNTQRCLDRLSGRKINP</sequence>
<accession>B2K4N0</accession>
<name>Y2265_YERPB</name>
<reference key="1">
    <citation type="submission" date="2008-04" db="EMBL/GenBank/DDBJ databases">
        <title>Complete sequence of Yersinia pseudotuberculosis PB1/+.</title>
        <authorList>
            <person name="Copeland A."/>
            <person name="Lucas S."/>
            <person name="Lapidus A."/>
            <person name="Glavina del Rio T."/>
            <person name="Dalin E."/>
            <person name="Tice H."/>
            <person name="Bruce D."/>
            <person name="Goodwin L."/>
            <person name="Pitluck S."/>
            <person name="Munk A.C."/>
            <person name="Brettin T."/>
            <person name="Detter J.C."/>
            <person name="Han C."/>
            <person name="Tapia R."/>
            <person name="Schmutz J."/>
            <person name="Larimer F."/>
            <person name="Land M."/>
            <person name="Hauser L."/>
            <person name="Challacombe J.F."/>
            <person name="Green L."/>
            <person name="Lindler L.E."/>
            <person name="Nikolich M.P."/>
            <person name="Richardson P."/>
        </authorList>
    </citation>
    <scope>NUCLEOTIDE SEQUENCE [LARGE SCALE GENOMIC DNA]</scope>
    <source>
        <strain>PB1/+</strain>
    </source>
</reference>
<evidence type="ECO:0000255" key="1">
    <source>
        <dbReference type="HAMAP-Rule" id="MF_01581"/>
    </source>
</evidence>
<evidence type="ECO:0000256" key="2">
    <source>
        <dbReference type="SAM" id="MobiDB-lite"/>
    </source>
</evidence>
<feature type="signal peptide" evidence="1">
    <location>
        <begin position="1"/>
        <end position="32"/>
    </location>
</feature>
<feature type="chain" id="PRO_5000345635" description="UPF0482 protein YPTS_2265/YPTS_2268">
    <location>
        <begin position="33"/>
        <end position="124"/>
    </location>
</feature>
<feature type="region of interest" description="Disordered" evidence="2">
    <location>
        <begin position="47"/>
        <end position="68"/>
    </location>
</feature>
<proteinExistence type="inferred from homology"/>
<keyword id="KW-0732">Signal</keyword>
<protein>
    <recommendedName>
        <fullName evidence="1">UPF0482 protein YPTS_2265/YPTS_2268</fullName>
    </recommendedName>
</protein>
<organism>
    <name type="scientific">Yersinia pseudotuberculosis serotype IB (strain PB1/+)</name>
    <dbReference type="NCBI Taxonomy" id="502801"/>
    <lineage>
        <taxon>Bacteria</taxon>
        <taxon>Pseudomonadati</taxon>
        <taxon>Pseudomonadota</taxon>
        <taxon>Gammaproteobacteria</taxon>
        <taxon>Enterobacterales</taxon>
        <taxon>Yersiniaceae</taxon>
        <taxon>Yersinia</taxon>
    </lineage>
</organism>
<gene>
    <name type="ordered locus">YPTS_2265</name>
</gene>
<gene>
    <name type="ordered locus">YPTS_2268</name>
</gene>
<comment type="similarity">
    <text evidence="1">Belongs to the UPF0482 family.</text>
</comment>